<organism>
    <name type="scientific">Salmonella paratyphi C (strain RKS4594)</name>
    <dbReference type="NCBI Taxonomy" id="476213"/>
    <lineage>
        <taxon>Bacteria</taxon>
        <taxon>Pseudomonadati</taxon>
        <taxon>Pseudomonadota</taxon>
        <taxon>Gammaproteobacteria</taxon>
        <taxon>Enterobacterales</taxon>
        <taxon>Enterobacteriaceae</taxon>
        <taxon>Salmonella</taxon>
    </lineage>
</organism>
<proteinExistence type="inferred from homology"/>
<name>TDCC_SALPC</name>
<feature type="chain" id="PRO_1000185660" description="Threonine/serine transporter TdcC">
    <location>
        <begin position="1"/>
        <end position="443"/>
    </location>
</feature>
<feature type="transmembrane region" description="Helical" evidence="1">
    <location>
        <begin position="22"/>
        <end position="42"/>
    </location>
</feature>
<feature type="transmembrane region" description="Helical" evidence="1">
    <location>
        <begin position="44"/>
        <end position="64"/>
    </location>
</feature>
<feature type="transmembrane region" description="Helical" evidence="1">
    <location>
        <begin position="97"/>
        <end position="117"/>
    </location>
</feature>
<feature type="transmembrane region" description="Helical" evidence="1">
    <location>
        <begin position="140"/>
        <end position="160"/>
    </location>
</feature>
<feature type="transmembrane region" description="Helical" evidence="1">
    <location>
        <begin position="163"/>
        <end position="183"/>
    </location>
</feature>
<feature type="transmembrane region" description="Helical" evidence="1">
    <location>
        <begin position="207"/>
        <end position="227"/>
    </location>
</feature>
<feature type="transmembrane region" description="Helical" evidence="1">
    <location>
        <begin position="259"/>
        <end position="279"/>
    </location>
</feature>
<feature type="transmembrane region" description="Helical" evidence="1">
    <location>
        <begin position="319"/>
        <end position="339"/>
    </location>
</feature>
<feature type="transmembrane region" description="Helical" evidence="1">
    <location>
        <begin position="366"/>
        <end position="386"/>
    </location>
</feature>
<feature type="transmembrane region" description="Helical" evidence="1">
    <location>
        <begin position="389"/>
        <end position="409"/>
    </location>
</feature>
<feature type="transmembrane region" description="Helical" evidence="1">
    <location>
        <begin position="423"/>
        <end position="443"/>
    </location>
</feature>
<dbReference type="EMBL" id="CP000857">
    <property type="protein sequence ID" value="ACN47404.1"/>
    <property type="molecule type" value="Genomic_DNA"/>
</dbReference>
<dbReference type="RefSeq" id="WP_000108129.1">
    <property type="nucleotide sequence ID" value="NC_012125.1"/>
</dbReference>
<dbReference type="KEGG" id="sei:SPC_3319"/>
<dbReference type="HOGENOM" id="CLU_052043_1_1_6"/>
<dbReference type="Proteomes" id="UP000001599">
    <property type="component" value="Chromosome"/>
</dbReference>
<dbReference type="GO" id="GO:0005886">
    <property type="term" value="C:plasma membrane"/>
    <property type="evidence" value="ECO:0007669"/>
    <property type="project" value="UniProtKB-SubCell"/>
</dbReference>
<dbReference type="GO" id="GO:0015194">
    <property type="term" value="F:L-serine transmembrane transporter activity"/>
    <property type="evidence" value="ECO:0007669"/>
    <property type="project" value="InterPro"/>
</dbReference>
<dbReference type="GO" id="GO:0015293">
    <property type="term" value="F:symporter activity"/>
    <property type="evidence" value="ECO:0007669"/>
    <property type="project" value="UniProtKB-UniRule"/>
</dbReference>
<dbReference type="GO" id="GO:0015565">
    <property type="term" value="F:threonine efflux transmembrane transporter activity"/>
    <property type="evidence" value="ECO:0007669"/>
    <property type="project" value="InterPro"/>
</dbReference>
<dbReference type="Gene3D" id="1.20.1740.10">
    <property type="entry name" value="Amino acid/polyamine transporter I"/>
    <property type="match status" value="1"/>
</dbReference>
<dbReference type="HAMAP" id="MF_01583">
    <property type="entry name" value="Thr_Ser_transp_TdcC"/>
    <property type="match status" value="1"/>
</dbReference>
<dbReference type="InterPro" id="IPR018227">
    <property type="entry name" value="Amino_acid_transport_2"/>
</dbReference>
<dbReference type="InterPro" id="IPR004694">
    <property type="entry name" value="Hydroxy_aa_transpt"/>
</dbReference>
<dbReference type="InterPro" id="IPR023726">
    <property type="entry name" value="Thr/Ser_transpt_TdcC"/>
</dbReference>
<dbReference type="NCBIfam" id="NF010152">
    <property type="entry name" value="PRK13629.1"/>
    <property type="match status" value="1"/>
</dbReference>
<dbReference type="NCBIfam" id="TIGR00814">
    <property type="entry name" value="stp"/>
    <property type="match status" value="1"/>
</dbReference>
<dbReference type="PANTHER" id="PTHR35334">
    <property type="entry name" value="SERINE TRANSPORTER"/>
    <property type="match status" value="1"/>
</dbReference>
<dbReference type="PANTHER" id="PTHR35334:SF1">
    <property type="entry name" value="THREONINE_SERINE TRANSPORTER TDCC"/>
    <property type="match status" value="1"/>
</dbReference>
<dbReference type="Pfam" id="PF03222">
    <property type="entry name" value="Trp_Tyr_perm"/>
    <property type="match status" value="1"/>
</dbReference>
<protein>
    <recommendedName>
        <fullName evidence="1">Threonine/serine transporter TdcC</fullName>
    </recommendedName>
    <alternativeName>
        <fullName evidence="1">H(+)/threonine-serine symporter</fullName>
    </alternativeName>
</protein>
<keyword id="KW-0029">Amino-acid transport</keyword>
<keyword id="KW-0997">Cell inner membrane</keyword>
<keyword id="KW-1003">Cell membrane</keyword>
<keyword id="KW-0472">Membrane</keyword>
<keyword id="KW-0769">Symport</keyword>
<keyword id="KW-0812">Transmembrane</keyword>
<keyword id="KW-1133">Transmembrane helix</keyword>
<keyword id="KW-0813">Transport</keyword>
<comment type="function">
    <text evidence="1">Involved in the import of threonine and serine into the cell, with the concomitant import of a proton (symport system).</text>
</comment>
<comment type="catalytic activity">
    <reaction evidence="1">
        <text>L-threonine(in) + H(+)(in) = L-threonine(out) + H(+)(out)</text>
        <dbReference type="Rhea" id="RHEA:28883"/>
        <dbReference type="ChEBI" id="CHEBI:15378"/>
        <dbReference type="ChEBI" id="CHEBI:57926"/>
    </reaction>
    <physiologicalReaction direction="right-to-left" evidence="1">
        <dbReference type="Rhea" id="RHEA:28885"/>
    </physiologicalReaction>
</comment>
<comment type="catalytic activity">
    <reaction evidence="1">
        <text>L-serine(in) + H(+)(in) = L-serine(out) + H(+)(out)</text>
        <dbReference type="Rhea" id="RHEA:28887"/>
        <dbReference type="ChEBI" id="CHEBI:15378"/>
        <dbReference type="ChEBI" id="CHEBI:33384"/>
    </reaction>
    <physiologicalReaction direction="right-to-left" evidence="1">
        <dbReference type="Rhea" id="RHEA:28889"/>
    </physiologicalReaction>
</comment>
<comment type="subcellular location">
    <subcellularLocation>
        <location evidence="1">Cell inner membrane</location>
        <topology evidence="1">Multi-pass membrane protein</topology>
    </subcellularLocation>
</comment>
<comment type="similarity">
    <text evidence="1">Belongs to the amino acid/polyamine transporter 2 family. SdaC/TdcC subfamily.</text>
</comment>
<gene>
    <name evidence="1" type="primary">tdcC</name>
    <name type="ordered locus">SPC_3319</name>
</gene>
<sequence length="443" mass="48974">MSTTDSIVSSQAKQSSWRKSDTTWTLGLFGTAIGAGVLFFPIRAGFGGLIPILLMLVLAYPIAFYCHRALARLCLSGSNPSGNITETVEEHFGKTGGVVITFLYFFAICPLLWIYGVTITNTFMTFWENQLQMPALNRGFVALFLLLLMAFVIWFGKDLMVKVMSYLVWPFIASLVLISLSLIPYWNSAVIDQVDLSNIALTGHDGILVTVWLGISIMVFSFNFSPIVSSFVVSKREEYEKEFGREFTERKCSQIISRASMLMVAVVMFFAFSCLFTLSPQNMADAKAQNIPVLSYLANHFASLSGTKSTFATVLEYGASIIALVAIFKSFFGHYLGTLEGLNGLVLKFGYKGDKTKVSMGKLNTISMIFIMGSTWVVAYANPNILDLIEAMGAPIIASLLCLLPMYAIRKAPSLAKYRGRLDNVFVTLIGLLTILNIVYKLF</sequence>
<accession>C0PZ16</accession>
<evidence type="ECO:0000255" key="1">
    <source>
        <dbReference type="HAMAP-Rule" id="MF_01583"/>
    </source>
</evidence>
<reference key="1">
    <citation type="journal article" date="2009" name="PLoS ONE">
        <title>Salmonella paratyphi C: genetic divergence from Salmonella choleraesuis and pathogenic convergence with Salmonella typhi.</title>
        <authorList>
            <person name="Liu W.-Q."/>
            <person name="Feng Y."/>
            <person name="Wang Y."/>
            <person name="Zou Q.-H."/>
            <person name="Chen F."/>
            <person name="Guo J.-T."/>
            <person name="Peng Y.-H."/>
            <person name="Jin Y."/>
            <person name="Li Y.-G."/>
            <person name="Hu S.-N."/>
            <person name="Johnston R.N."/>
            <person name="Liu G.-R."/>
            <person name="Liu S.-L."/>
        </authorList>
    </citation>
    <scope>NUCLEOTIDE SEQUENCE [LARGE SCALE GENOMIC DNA]</scope>
    <source>
        <strain>RKS4594</strain>
    </source>
</reference>